<organism>
    <name type="scientific">Clostridium beijerinckii (strain ATCC 51743 / NCIMB 8052)</name>
    <name type="common">Clostridium acetobutylicum</name>
    <dbReference type="NCBI Taxonomy" id="290402"/>
    <lineage>
        <taxon>Bacteria</taxon>
        <taxon>Bacillati</taxon>
        <taxon>Bacillota</taxon>
        <taxon>Clostridia</taxon>
        <taxon>Eubacteriales</taxon>
        <taxon>Clostridiaceae</taxon>
        <taxon>Clostridium</taxon>
    </lineage>
</organism>
<dbReference type="EC" id="2.3.1.234" evidence="1"/>
<dbReference type="EMBL" id="CP000721">
    <property type="protein sequence ID" value="ABR32565.1"/>
    <property type="molecule type" value="Genomic_DNA"/>
</dbReference>
<dbReference type="RefSeq" id="WP_011967726.1">
    <property type="nucleotide sequence ID" value="NC_009617.1"/>
</dbReference>
<dbReference type="SMR" id="A6LQD5"/>
<dbReference type="KEGG" id="cbe:Cbei_0377"/>
<dbReference type="eggNOG" id="COG0533">
    <property type="taxonomic scope" value="Bacteria"/>
</dbReference>
<dbReference type="HOGENOM" id="CLU_023208_0_2_9"/>
<dbReference type="Proteomes" id="UP000000565">
    <property type="component" value="Chromosome"/>
</dbReference>
<dbReference type="GO" id="GO:0005737">
    <property type="term" value="C:cytoplasm"/>
    <property type="evidence" value="ECO:0007669"/>
    <property type="project" value="UniProtKB-SubCell"/>
</dbReference>
<dbReference type="GO" id="GO:0005506">
    <property type="term" value="F:iron ion binding"/>
    <property type="evidence" value="ECO:0007669"/>
    <property type="project" value="UniProtKB-UniRule"/>
</dbReference>
<dbReference type="GO" id="GO:0061711">
    <property type="term" value="F:N(6)-L-threonylcarbamoyladenine synthase activity"/>
    <property type="evidence" value="ECO:0007669"/>
    <property type="project" value="UniProtKB-EC"/>
</dbReference>
<dbReference type="GO" id="GO:0002949">
    <property type="term" value="P:tRNA threonylcarbamoyladenosine modification"/>
    <property type="evidence" value="ECO:0007669"/>
    <property type="project" value="UniProtKB-UniRule"/>
</dbReference>
<dbReference type="CDD" id="cd24133">
    <property type="entry name" value="ASKHA_NBD_TsaD_bac"/>
    <property type="match status" value="1"/>
</dbReference>
<dbReference type="FunFam" id="3.30.420.40:FF:000040">
    <property type="entry name" value="tRNA N6-adenosine threonylcarbamoyltransferase"/>
    <property type="match status" value="1"/>
</dbReference>
<dbReference type="Gene3D" id="3.30.420.40">
    <property type="match status" value="2"/>
</dbReference>
<dbReference type="HAMAP" id="MF_01445">
    <property type="entry name" value="TsaD"/>
    <property type="match status" value="1"/>
</dbReference>
<dbReference type="InterPro" id="IPR043129">
    <property type="entry name" value="ATPase_NBD"/>
</dbReference>
<dbReference type="InterPro" id="IPR000905">
    <property type="entry name" value="Gcp-like_dom"/>
</dbReference>
<dbReference type="InterPro" id="IPR017861">
    <property type="entry name" value="KAE1/TsaD"/>
</dbReference>
<dbReference type="InterPro" id="IPR022450">
    <property type="entry name" value="TsaD"/>
</dbReference>
<dbReference type="NCBIfam" id="TIGR00329">
    <property type="entry name" value="gcp_kae1"/>
    <property type="match status" value="1"/>
</dbReference>
<dbReference type="NCBIfam" id="TIGR03723">
    <property type="entry name" value="T6A_TsaD_YgjD"/>
    <property type="match status" value="1"/>
</dbReference>
<dbReference type="PANTHER" id="PTHR11735">
    <property type="entry name" value="TRNA N6-ADENOSINE THREONYLCARBAMOYLTRANSFERASE"/>
    <property type="match status" value="1"/>
</dbReference>
<dbReference type="PANTHER" id="PTHR11735:SF6">
    <property type="entry name" value="TRNA N6-ADENOSINE THREONYLCARBAMOYLTRANSFERASE, MITOCHONDRIAL"/>
    <property type="match status" value="1"/>
</dbReference>
<dbReference type="Pfam" id="PF00814">
    <property type="entry name" value="TsaD"/>
    <property type="match status" value="1"/>
</dbReference>
<dbReference type="PRINTS" id="PR00789">
    <property type="entry name" value="OSIALOPTASE"/>
</dbReference>
<dbReference type="SUPFAM" id="SSF53067">
    <property type="entry name" value="Actin-like ATPase domain"/>
    <property type="match status" value="2"/>
</dbReference>
<accession>A6LQD5</accession>
<name>TSAD_CLOB8</name>
<proteinExistence type="inferred from homology"/>
<evidence type="ECO:0000255" key="1">
    <source>
        <dbReference type="HAMAP-Rule" id="MF_01445"/>
    </source>
</evidence>
<protein>
    <recommendedName>
        <fullName evidence="1">tRNA N6-adenosine threonylcarbamoyltransferase</fullName>
        <ecNumber evidence="1">2.3.1.234</ecNumber>
    </recommendedName>
    <alternativeName>
        <fullName evidence="1">N6-L-threonylcarbamoyladenine synthase</fullName>
        <shortName evidence="1">t(6)A synthase</shortName>
    </alternativeName>
    <alternativeName>
        <fullName evidence="1">t(6)A37 threonylcarbamoyladenosine biosynthesis protein TsaD</fullName>
    </alternativeName>
    <alternativeName>
        <fullName evidence="1">tRNA threonylcarbamoyladenosine biosynthesis protein TsaD</fullName>
    </alternativeName>
</protein>
<feature type="chain" id="PRO_1000087470" description="tRNA N6-adenosine threonylcarbamoyltransferase">
    <location>
        <begin position="1"/>
        <end position="339"/>
    </location>
</feature>
<feature type="binding site" evidence="1">
    <location>
        <position position="114"/>
    </location>
    <ligand>
        <name>Fe cation</name>
        <dbReference type="ChEBI" id="CHEBI:24875"/>
    </ligand>
</feature>
<feature type="binding site" evidence="1">
    <location>
        <position position="118"/>
    </location>
    <ligand>
        <name>Fe cation</name>
        <dbReference type="ChEBI" id="CHEBI:24875"/>
    </ligand>
</feature>
<feature type="binding site" evidence="1">
    <location>
        <begin position="137"/>
        <end position="141"/>
    </location>
    <ligand>
        <name>substrate</name>
    </ligand>
</feature>
<feature type="binding site" evidence="1">
    <location>
        <position position="170"/>
    </location>
    <ligand>
        <name>substrate</name>
    </ligand>
</feature>
<feature type="binding site" evidence="1">
    <location>
        <position position="183"/>
    </location>
    <ligand>
        <name>substrate</name>
    </ligand>
</feature>
<feature type="binding site" evidence="1">
    <location>
        <position position="187"/>
    </location>
    <ligand>
        <name>substrate</name>
    </ligand>
</feature>
<feature type="binding site" evidence="1">
    <location>
        <position position="277"/>
    </location>
    <ligand>
        <name>substrate</name>
    </ligand>
</feature>
<feature type="binding site" evidence="1">
    <location>
        <position position="305"/>
    </location>
    <ligand>
        <name>Fe cation</name>
        <dbReference type="ChEBI" id="CHEBI:24875"/>
    </ligand>
</feature>
<reference key="1">
    <citation type="submission" date="2007-06" db="EMBL/GenBank/DDBJ databases">
        <title>Complete sequence of Clostridium beijerinckii NCIMB 8052.</title>
        <authorList>
            <consortium name="US DOE Joint Genome Institute"/>
            <person name="Copeland A."/>
            <person name="Lucas S."/>
            <person name="Lapidus A."/>
            <person name="Barry K."/>
            <person name="Detter J.C."/>
            <person name="Glavina del Rio T."/>
            <person name="Hammon N."/>
            <person name="Israni S."/>
            <person name="Dalin E."/>
            <person name="Tice H."/>
            <person name="Pitluck S."/>
            <person name="Sims D."/>
            <person name="Brettin T."/>
            <person name="Bruce D."/>
            <person name="Tapia R."/>
            <person name="Brainard J."/>
            <person name="Schmutz J."/>
            <person name="Larimer F."/>
            <person name="Land M."/>
            <person name="Hauser L."/>
            <person name="Kyrpides N."/>
            <person name="Mikhailova N."/>
            <person name="Bennet G."/>
            <person name="Cann I."/>
            <person name="Chen J.-S."/>
            <person name="Contreras A.L."/>
            <person name="Jones D."/>
            <person name="Kashket E."/>
            <person name="Mitchell W."/>
            <person name="Stoddard S."/>
            <person name="Schwarz W."/>
            <person name="Qureshi N."/>
            <person name="Young M."/>
            <person name="Shi Z."/>
            <person name="Ezeji T."/>
            <person name="White B."/>
            <person name="Blaschek H."/>
            <person name="Richardson P."/>
        </authorList>
    </citation>
    <scope>NUCLEOTIDE SEQUENCE [LARGE SCALE GENOMIC DNA]</scope>
    <source>
        <strain>ATCC 51743 / NCIMB 8052</strain>
    </source>
</reference>
<sequence length="339" mass="36263">MDKKIILAIESSCDETAAAVVVNGREVLSNIIASQIDTHKKFGGVVPEVASRMHIEAVDSVVKAALLEAGISIDDVDAIGVTYGPGLVGALLVGLQYAKGLALGSKKPLIGVNHIQGHISANFIEHKDLKPPFVSLVVSGGHTFIVHVKGYRDFEVIGQTRDDAAGEAYDKVARALELGYPGGPKIDKLAKQGNKDAIEFPRAKFQDDTLDFSFSGVKSAVLNYLNKAKMKEEEVNKADIAASFQKAIIDVLKTNLFLTCERKGIKKIAVAGGVASNSCLRETLLEEGRKKGIEILFPSPILCTDNAAMIGSAAYFNYQEGAVSDLNINAKPNLKLGER</sequence>
<keyword id="KW-0012">Acyltransferase</keyword>
<keyword id="KW-0963">Cytoplasm</keyword>
<keyword id="KW-0408">Iron</keyword>
<keyword id="KW-0479">Metal-binding</keyword>
<keyword id="KW-0808">Transferase</keyword>
<keyword id="KW-0819">tRNA processing</keyword>
<comment type="function">
    <text evidence="1">Required for the formation of a threonylcarbamoyl group on adenosine at position 37 (t(6)A37) in tRNAs that read codons beginning with adenine. Is involved in the transfer of the threonylcarbamoyl moiety of threonylcarbamoyl-AMP (TC-AMP) to the N6 group of A37, together with TsaE and TsaB. TsaD likely plays a direct catalytic role in this reaction.</text>
</comment>
<comment type="catalytic activity">
    <reaction evidence="1">
        <text>L-threonylcarbamoyladenylate + adenosine(37) in tRNA = N(6)-L-threonylcarbamoyladenosine(37) in tRNA + AMP + H(+)</text>
        <dbReference type="Rhea" id="RHEA:37059"/>
        <dbReference type="Rhea" id="RHEA-COMP:10162"/>
        <dbReference type="Rhea" id="RHEA-COMP:10163"/>
        <dbReference type="ChEBI" id="CHEBI:15378"/>
        <dbReference type="ChEBI" id="CHEBI:73682"/>
        <dbReference type="ChEBI" id="CHEBI:74411"/>
        <dbReference type="ChEBI" id="CHEBI:74418"/>
        <dbReference type="ChEBI" id="CHEBI:456215"/>
        <dbReference type="EC" id="2.3.1.234"/>
    </reaction>
</comment>
<comment type="cofactor">
    <cofactor evidence="1">
        <name>Fe(2+)</name>
        <dbReference type="ChEBI" id="CHEBI:29033"/>
    </cofactor>
    <text evidence="1">Binds 1 Fe(2+) ion per subunit.</text>
</comment>
<comment type="subcellular location">
    <subcellularLocation>
        <location evidence="1">Cytoplasm</location>
    </subcellularLocation>
</comment>
<comment type="similarity">
    <text evidence="1">Belongs to the KAE1 / TsaD family.</text>
</comment>
<gene>
    <name evidence="1" type="primary">tsaD</name>
    <name type="synonym">gcp</name>
    <name type="ordered locus">Cbei_0377</name>
</gene>